<sequence length="74" mass="8721">MARRRRRNKVCSFCAEKTTTVSYKDLDRLKKYITERGKILPRRINGNCAKHQRQLTTAIKKARQLALLPYTVEN</sequence>
<reference key="1">
    <citation type="submission" date="2008-04" db="EMBL/GenBank/DDBJ databases">
        <title>Complete sequence of chromosome of Natranaerobius thermophilus JW/NM-WN-LF.</title>
        <authorList>
            <consortium name="US DOE Joint Genome Institute"/>
            <person name="Copeland A."/>
            <person name="Lucas S."/>
            <person name="Lapidus A."/>
            <person name="Glavina del Rio T."/>
            <person name="Dalin E."/>
            <person name="Tice H."/>
            <person name="Bruce D."/>
            <person name="Goodwin L."/>
            <person name="Pitluck S."/>
            <person name="Chertkov O."/>
            <person name="Brettin T."/>
            <person name="Detter J.C."/>
            <person name="Han C."/>
            <person name="Kuske C.R."/>
            <person name="Schmutz J."/>
            <person name="Larimer F."/>
            <person name="Land M."/>
            <person name="Hauser L."/>
            <person name="Kyrpides N."/>
            <person name="Lykidis A."/>
            <person name="Mesbah N.M."/>
            <person name="Wiegel J."/>
        </authorList>
    </citation>
    <scope>NUCLEOTIDE SEQUENCE [LARGE SCALE GENOMIC DNA]</scope>
    <source>
        <strain>ATCC BAA-1301 / DSM 18059 / JW/NM-WN-LF</strain>
    </source>
</reference>
<comment type="function">
    <text evidence="1">Binds as a heterodimer with protein bS6 to the central domain of the 16S rRNA, where it helps stabilize the platform of the 30S subunit.</text>
</comment>
<comment type="subunit">
    <text evidence="1">Part of the 30S ribosomal subunit. Forms a tight heterodimer with protein bS6.</text>
</comment>
<comment type="similarity">
    <text evidence="1">Belongs to the bacterial ribosomal protein bS18 family.</text>
</comment>
<dbReference type="EMBL" id="CP001034">
    <property type="protein sequence ID" value="ACB86460.1"/>
    <property type="molecule type" value="Genomic_DNA"/>
</dbReference>
<dbReference type="RefSeq" id="WP_012449292.1">
    <property type="nucleotide sequence ID" value="NC_010718.1"/>
</dbReference>
<dbReference type="SMR" id="B2A454"/>
<dbReference type="FunCoup" id="B2A454">
    <property type="interactions" value="414"/>
</dbReference>
<dbReference type="STRING" id="457570.Nther_2914"/>
<dbReference type="KEGG" id="nth:Nther_2914"/>
<dbReference type="eggNOG" id="COG0238">
    <property type="taxonomic scope" value="Bacteria"/>
</dbReference>
<dbReference type="HOGENOM" id="CLU_148710_2_2_9"/>
<dbReference type="InParanoid" id="B2A454"/>
<dbReference type="OrthoDB" id="9812008at2"/>
<dbReference type="Proteomes" id="UP000001683">
    <property type="component" value="Chromosome"/>
</dbReference>
<dbReference type="GO" id="GO:0022627">
    <property type="term" value="C:cytosolic small ribosomal subunit"/>
    <property type="evidence" value="ECO:0007669"/>
    <property type="project" value="TreeGrafter"/>
</dbReference>
<dbReference type="GO" id="GO:0070181">
    <property type="term" value="F:small ribosomal subunit rRNA binding"/>
    <property type="evidence" value="ECO:0007669"/>
    <property type="project" value="TreeGrafter"/>
</dbReference>
<dbReference type="GO" id="GO:0003735">
    <property type="term" value="F:structural constituent of ribosome"/>
    <property type="evidence" value="ECO:0007669"/>
    <property type="project" value="InterPro"/>
</dbReference>
<dbReference type="GO" id="GO:0006412">
    <property type="term" value="P:translation"/>
    <property type="evidence" value="ECO:0007669"/>
    <property type="project" value="UniProtKB-UniRule"/>
</dbReference>
<dbReference type="FunFam" id="4.10.640.10:FF:000004">
    <property type="entry name" value="30S ribosomal protein S18"/>
    <property type="match status" value="1"/>
</dbReference>
<dbReference type="Gene3D" id="4.10.640.10">
    <property type="entry name" value="Ribosomal protein S18"/>
    <property type="match status" value="1"/>
</dbReference>
<dbReference type="HAMAP" id="MF_00270">
    <property type="entry name" value="Ribosomal_bS18"/>
    <property type="match status" value="1"/>
</dbReference>
<dbReference type="InterPro" id="IPR001648">
    <property type="entry name" value="Ribosomal_bS18"/>
</dbReference>
<dbReference type="InterPro" id="IPR036870">
    <property type="entry name" value="Ribosomal_bS18_sf"/>
</dbReference>
<dbReference type="NCBIfam" id="TIGR00165">
    <property type="entry name" value="S18"/>
    <property type="match status" value="1"/>
</dbReference>
<dbReference type="PANTHER" id="PTHR13479">
    <property type="entry name" value="30S RIBOSOMAL PROTEIN S18"/>
    <property type="match status" value="1"/>
</dbReference>
<dbReference type="PANTHER" id="PTHR13479:SF40">
    <property type="entry name" value="SMALL RIBOSOMAL SUBUNIT PROTEIN BS18M"/>
    <property type="match status" value="1"/>
</dbReference>
<dbReference type="Pfam" id="PF01084">
    <property type="entry name" value="Ribosomal_S18"/>
    <property type="match status" value="1"/>
</dbReference>
<dbReference type="PRINTS" id="PR00974">
    <property type="entry name" value="RIBOSOMALS18"/>
</dbReference>
<dbReference type="SUPFAM" id="SSF46911">
    <property type="entry name" value="Ribosomal protein S18"/>
    <property type="match status" value="1"/>
</dbReference>
<name>RS18_NATTJ</name>
<evidence type="ECO:0000255" key="1">
    <source>
        <dbReference type="HAMAP-Rule" id="MF_00270"/>
    </source>
</evidence>
<evidence type="ECO:0000305" key="2"/>
<feature type="chain" id="PRO_0000345515" description="Small ribosomal subunit protein bS18">
    <location>
        <begin position="1"/>
        <end position="74"/>
    </location>
</feature>
<gene>
    <name evidence="1" type="primary">rpsR</name>
    <name type="ordered locus">Nther_2914</name>
</gene>
<keyword id="KW-1185">Reference proteome</keyword>
<keyword id="KW-0687">Ribonucleoprotein</keyword>
<keyword id="KW-0689">Ribosomal protein</keyword>
<keyword id="KW-0694">RNA-binding</keyword>
<keyword id="KW-0699">rRNA-binding</keyword>
<accession>B2A454</accession>
<protein>
    <recommendedName>
        <fullName evidence="1">Small ribosomal subunit protein bS18</fullName>
    </recommendedName>
    <alternativeName>
        <fullName evidence="2">30S ribosomal protein S18</fullName>
    </alternativeName>
</protein>
<proteinExistence type="inferred from homology"/>
<organism>
    <name type="scientific">Natranaerobius thermophilus (strain ATCC BAA-1301 / DSM 18059 / JW/NM-WN-LF)</name>
    <dbReference type="NCBI Taxonomy" id="457570"/>
    <lineage>
        <taxon>Bacteria</taxon>
        <taxon>Bacillati</taxon>
        <taxon>Bacillota</taxon>
        <taxon>Clostridia</taxon>
        <taxon>Natranaerobiales</taxon>
        <taxon>Natranaerobiaceae</taxon>
        <taxon>Natranaerobius</taxon>
    </lineage>
</organism>